<evidence type="ECO:0000255" key="1">
    <source>
        <dbReference type="HAMAP-Rule" id="MF_00227"/>
    </source>
</evidence>
<reference key="1">
    <citation type="journal article" date="2008" name="J. Bacteriol.">
        <title>Genome sequence of a nephritogenic and highly transformable M49 strain of Streptococcus pyogenes.</title>
        <authorList>
            <person name="McShan W.M."/>
            <person name="Ferretti J.J."/>
            <person name="Karasawa T."/>
            <person name="Suvorov A.N."/>
            <person name="Lin S."/>
            <person name="Qin B."/>
            <person name="Jia H."/>
            <person name="Kenton S."/>
            <person name="Najar F."/>
            <person name="Wu H."/>
            <person name="Scott J."/>
            <person name="Roe B.A."/>
            <person name="Savic D.J."/>
        </authorList>
    </citation>
    <scope>NUCLEOTIDE SEQUENCE [LARGE SCALE GENOMIC DNA]</scope>
    <source>
        <strain>NZ131</strain>
    </source>
</reference>
<proteinExistence type="inferred from homology"/>
<keyword id="KW-0255">Endonuclease</keyword>
<keyword id="KW-0378">Hydrolase</keyword>
<keyword id="KW-0540">Nuclease</keyword>
<keyword id="KW-0694">RNA-binding</keyword>
<keyword id="KW-0819">tRNA processing</keyword>
<accession>B5XJN7</accession>
<protein>
    <recommendedName>
        <fullName evidence="1">Ribonuclease P protein component</fullName>
        <shortName evidence="1">RNase P protein</shortName>
        <shortName evidence="1">RNaseP protein</shortName>
        <ecNumber evidence="1">3.1.26.5</ecNumber>
    </recommendedName>
    <alternativeName>
        <fullName evidence="1">Protein C5</fullName>
    </alternativeName>
</protein>
<sequence length="119" mass="13866">MKKTYRVKREKDFQAIFKDGKSTANRKFVIYHLNRGQDHFRVGISVGKKIGNAVTRNAVKRKIRHVIMALGHQLKSEDFVVIARKGVESLEYQELQQNLHHVLKLAQLLEKGFESEEKH</sequence>
<gene>
    <name evidence="1" type="primary">rnpA</name>
    <name type="ordered locus">Spy49_0207</name>
</gene>
<organism>
    <name type="scientific">Streptococcus pyogenes serotype M49 (strain NZ131)</name>
    <dbReference type="NCBI Taxonomy" id="471876"/>
    <lineage>
        <taxon>Bacteria</taxon>
        <taxon>Bacillati</taxon>
        <taxon>Bacillota</taxon>
        <taxon>Bacilli</taxon>
        <taxon>Lactobacillales</taxon>
        <taxon>Streptococcaceae</taxon>
        <taxon>Streptococcus</taxon>
    </lineage>
</organism>
<comment type="function">
    <text evidence="1">RNaseP catalyzes the removal of the 5'-leader sequence from pre-tRNA to produce the mature 5'-terminus. It can also cleave other RNA substrates such as 4.5S RNA. The protein component plays an auxiliary but essential role in vivo by binding to the 5'-leader sequence and broadening the substrate specificity of the ribozyme.</text>
</comment>
<comment type="catalytic activity">
    <reaction evidence="1">
        <text>Endonucleolytic cleavage of RNA, removing 5'-extranucleotides from tRNA precursor.</text>
        <dbReference type="EC" id="3.1.26.5"/>
    </reaction>
</comment>
<comment type="subunit">
    <text evidence="1">Consists of a catalytic RNA component (M1 or rnpB) and a protein subunit.</text>
</comment>
<comment type="similarity">
    <text evidence="1">Belongs to the RnpA family.</text>
</comment>
<feature type="chain" id="PRO_1000100400" description="Ribonuclease P protein component">
    <location>
        <begin position="1"/>
        <end position="119"/>
    </location>
</feature>
<dbReference type="EC" id="3.1.26.5" evidence="1"/>
<dbReference type="EMBL" id="CP000829">
    <property type="protein sequence ID" value="ACI60549.1"/>
    <property type="molecule type" value="Genomic_DNA"/>
</dbReference>
<dbReference type="SMR" id="B5XJN7"/>
<dbReference type="KEGG" id="soz:Spy49_0207"/>
<dbReference type="HOGENOM" id="CLU_117179_9_1_9"/>
<dbReference type="Proteomes" id="UP000001039">
    <property type="component" value="Chromosome"/>
</dbReference>
<dbReference type="GO" id="GO:0030677">
    <property type="term" value="C:ribonuclease P complex"/>
    <property type="evidence" value="ECO:0007669"/>
    <property type="project" value="TreeGrafter"/>
</dbReference>
<dbReference type="GO" id="GO:0042781">
    <property type="term" value="F:3'-tRNA processing endoribonuclease activity"/>
    <property type="evidence" value="ECO:0007669"/>
    <property type="project" value="TreeGrafter"/>
</dbReference>
<dbReference type="GO" id="GO:0004526">
    <property type="term" value="F:ribonuclease P activity"/>
    <property type="evidence" value="ECO:0007669"/>
    <property type="project" value="UniProtKB-UniRule"/>
</dbReference>
<dbReference type="GO" id="GO:0000049">
    <property type="term" value="F:tRNA binding"/>
    <property type="evidence" value="ECO:0007669"/>
    <property type="project" value="UniProtKB-UniRule"/>
</dbReference>
<dbReference type="GO" id="GO:0001682">
    <property type="term" value="P:tRNA 5'-leader removal"/>
    <property type="evidence" value="ECO:0007669"/>
    <property type="project" value="UniProtKB-UniRule"/>
</dbReference>
<dbReference type="FunFam" id="3.30.230.10:FF:000021">
    <property type="entry name" value="Ribonuclease P protein component"/>
    <property type="match status" value="1"/>
</dbReference>
<dbReference type="Gene3D" id="3.30.230.10">
    <property type="match status" value="1"/>
</dbReference>
<dbReference type="HAMAP" id="MF_00227">
    <property type="entry name" value="RNase_P"/>
    <property type="match status" value="1"/>
</dbReference>
<dbReference type="InterPro" id="IPR020568">
    <property type="entry name" value="Ribosomal_Su5_D2-typ_SF"/>
</dbReference>
<dbReference type="InterPro" id="IPR014721">
    <property type="entry name" value="Ribsml_uS5_D2-typ_fold_subgr"/>
</dbReference>
<dbReference type="InterPro" id="IPR000100">
    <property type="entry name" value="RNase_P"/>
</dbReference>
<dbReference type="InterPro" id="IPR020539">
    <property type="entry name" value="RNase_P_CS"/>
</dbReference>
<dbReference type="NCBIfam" id="TIGR00188">
    <property type="entry name" value="rnpA"/>
    <property type="match status" value="1"/>
</dbReference>
<dbReference type="PANTHER" id="PTHR33992">
    <property type="entry name" value="RIBONUCLEASE P PROTEIN COMPONENT"/>
    <property type="match status" value="1"/>
</dbReference>
<dbReference type="PANTHER" id="PTHR33992:SF1">
    <property type="entry name" value="RIBONUCLEASE P PROTEIN COMPONENT"/>
    <property type="match status" value="1"/>
</dbReference>
<dbReference type="Pfam" id="PF00825">
    <property type="entry name" value="Ribonuclease_P"/>
    <property type="match status" value="1"/>
</dbReference>
<dbReference type="SUPFAM" id="SSF54211">
    <property type="entry name" value="Ribosomal protein S5 domain 2-like"/>
    <property type="match status" value="1"/>
</dbReference>
<dbReference type="PROSITE" id="PS00648">
    <property type="entry name" value="RIBONUCLEASE_P"/>
    <property type="match status" value="1"/>
</dbReference>
<name>RNPA_STRPZ</name>